<keyword id="KW-0687">Ribonucleoprotein</keyword>
<keyword id="KW-0689">Ribosomal protein</keyword>
<feature type="chain" id="PRO_0000266623" description="Small ribosomal subunit protein bS21C">
    <location>
        <begin position="1"/>
        <end position="62"/>
    </location>
</feature>
<feature type="region of interest" description="Disordered" evidence="2">
    <location>
        <begin position="43"/>
        <end position="62"/>
    </location>
</feature>
<feature type="compositionally biased region" description="Basic residues" evidence="2">
    <location>
        <begin position="45"/>
        <end position="62"/>
    </location>
</feature>
<organism>
    <name type="scientific">Trichormus variabilis (strain ATCC 29413 / PCC 7937)</name>
    <name type="common">Anabaena variabilis</name>
    <dbReference type="NCBI Taxonomy" id="240292"/>
    <lineage>
        <taxon>Bacteria</taxon>
        <taxon>Bacillati</taxon>
        <taxon>Cyanobacteriota</taxon>
        <taxon>Cyanophyceae</taxon>
        <taxon>Nostocales</taxon>
        <taxon>Nostocaceae</taxon>
        <taxon>Trichormus</taxon>
    </lineage>
</organism>
<name>RS213_TRIV2</name>
<dbReference type="EMBL" id="CP000117">
    <property type="protein sequence ID" value="ABA24240.1"/>
    <property type="molecule type" value="Genomic_DNA"/>
</dbReference>
<dbReference type="SMR" id="Q3M446"/>
<dbReference type="STRING" id="240292.Ava_4643"/>
<dbReference type="KEGG" id="ava:Ava_4643"/>
<dbReference type="eggNOG" id="COG0828">
    <property type="taxonomic scope" value="Bacteria"/>
</dbReference>
<dbReference type="HOGENOM" id="CLU_159258_3_1_3"/>
<dbReference type="Proteomes" id="UP000002533">
    <property type="component" value="Chromosome"/>
</dbReference>
<dbReference type="GO" id="GO:1990904">
    <property type="term" value="C:ribonucleoprotein complex"/>
    <property type="evidence" value="ECO:0007669"/>
    <property type="project" value="UniProtKB-KW"/>
</dbReference>
<dbReference type="GO" id="GO:0005840">
    <property type="term" value="C:ribosome"/>
    <property type="evidence" value="ECO:0007669"/>
    <property type="project" value="UniProtKB-KW"/>
</dbReference>
<dbReference type="GO" id="GO:0003735">
    <property type="term" value="F:structural constituent of ribosome"/>
    <property type="evidence" value="ECO:0007669"/>
    <property type="project" value="InterPro"/>
</dbReference>
<dbReference type="GO" id="GO:0006412">
    <property type="term" value="P:translation"/>
    <property type="evidence" value="ECO:0007669"/>
    <property type="project" value="UniProtKB-UniRule"/>
</dbReference>
<dbReference type="Gene3D" id="1.20.5.1150">
    <property type="entry name" value="Ribosomal protein S8"/>
    <property type="match status" value="1"/>
</dbReference>
<dbReference type="HAMAP" id="MF_00358">
    <property type="entry name" value="Ribosomal_bS21"/>
    <property type="match status" value="1"/>
</dbReference>
<dbReference type="InterPro" id="IPR001911">
    <property type="entry name" value="Ribosomal_bS21"/>
</dbReference>
<dbReference type="InterPro" id="IPR018278">
    <property type="entry name" value="Ribosomal_bS21_CS"/>
</dbReference>
<dbReference type="InterPro" id="IPR038380">
    <property type="entry name" value="Ribosomal_bS21_sf"/>
</dbReference>
<dbReference type="NCBIfam" id="TIGR00030">
    <property type="entry name" value="S21p"/>
    <property type="match status" value="1"/>
</dbReference>
<dbReference type="PANTHER" id="PTHR21109">
    <property type="entry name" value="MITOCHONDRIAL 28S RIBOSOMAL PROTEIN S21"/>
    <property type="match status" value="1"/>
</dbReference>
<dbReference type="PANTHER" id="PTHR21109:SF0">
    <property type="entry name" value="SMALL RIBOSOMAL SUBUNIT PROTEIN BS21M"/>
    <property type="match status" value="1"/>
</dbReference>
<dbReference type="Pfam" id="PF01165">
    <property type="entry name" value="Ribosomal_S21"/>
    <property type="match status" value="1"/>
</dbReference>
<dbReference type="PRINTS" id="PR00976">
    <property type="entry name" value="RIBOSOMALS21"/>
</dbReference>
<dbReference type="PROSITE" id="PS01181">
    <property type="entry name" value="RIBOSOMAL_S21"/>
    <property type="match status" value="1"/>
</dbReference>
<protein>
    <recommendedName>
        <fullName evidence="1">Small ribosomal subunit protein bS21C</fullName>
    </recommendedName>
    <alternativeName>
        <fullName evidence="3">30S ribosomal protein S21 3</fullName>
    </alternativeName>
</protein>
<reference key="1">
    <citation type="journal article" date="2014" name="Stand. Genomic Sci.">
        <title>Complete genome sequence of Anabaena variabilis ATCC 29413.</title>
        <authorList>
            <person name="Thiel T."/>
            <person name="Pratte B.S."/>
            <person name="Zhong J."/>
            <person name="Goodwin L."/>
            <person name="Copeland A."/>
            <person name="Lucas S."/>
            <person name="Han C."/>
            <person name="Pitluck S."/>
            <person name="Land M.L."/>
            <person name="Kyrpides N.C."/>
            <person name="Woyke T."/>
        </authorList>
    </citation>
    <scope>NUCLEOTIDE SEQUENCE [LARGE SCALE GENOMIC DNA]</scope>
    <source>
        <strain>ATCC 29413 / PCC 7937</strain>
    </source>
</reference>
<proteinExistence type="inferred from homology"/>
<sequence length="62" mass="7531">MTQIVVGENEHIESALRRFKREVSKAGIFQDMRKHRHFETPIEKSKRKKLALHKQSKRRFRT</sequence>
<evidence type="ECO:0000255" key="1">
    <source>
        <dbReference type="HAMAP-Rule" id="MF_00358"/>
    </source>
</evidence>
<evidence type="ECO:0000256" key="2">
    <source>
        <dbReference type="SAM" id="MobiDB-lite"/>
    </source>
</evidence>
<evidence type="ECO:0000305" key="3"/>
<accession>Q3M446</accession>
<gene>
    <name evidence="1" type="primary">rpsU3</name>
    <name evidence="1" type="synonym">rps21-3</name>
    <name type="ordered locus">Ava_4643</name>
</gene>
<comment type="similarity">
    <text evidence="1">Belongs to the bacterial ribosomal protein bS21 family.</text>
</comment>